<protein>
    <recommendedName>
        <fullName evidence="1">Small ribosomal subunit protein uS10</fullName>
    </recommendedName>
    <alternativeName>
        <fullName evidence="2">30S ribosomal protein S10</fullName>
    </alternativeName>
</protein>
<gene>
    <name evidence="1" type="primary">rpsJ</name>
    <name type="ordered locus">PD_0436</name>
</gene>
<feature type="chain" id="PRO_0000146638" description="Small ribosomal subunit protein uS10">
    <location>
        <begin position="1"/>
        <end position="103"/>
    </location>
</feature>
<evidence type="ECO:0000255" key="1">
    <source>
        <dbReference type="HAMAP-Rule" id="MF_00508"/>
    </source>
</evidence>
<evidence type="ECO:0000305" key="2"/>
<proteinExistence type="inferred from homology"/>
<sequence>MADQKIQIRLKAFDCRLIDRSAGEIVETAKRTGAHVRGPIPLPTKIERCTILVSPHADKDARDQYETCTYKRVLYIVDPNDKTVDALMKLELAAGVDVQIKLT</sequence>
<accession>P66349</accession>
<accession>Q9PE77</accession>
<keyword id="KW-1185">Reference proteome</keyword>
<keyword id="KW-0687">Ribonucleoprotein</keyword>
<keyword id="KW-0689">Ribosomal protein</keyword>
<name>RS10_XYLFT</name>
<reference key="1">
    <citation type="journal article" date="2003" name="J. Bacteriol.">
        <title>Comparative analyses of the complete genome sequences of Pierce's disease and citrus variegated chlorosis strains of Xylella fastidiosa.</title>
        <authorList>
            <person name="Van Sluys M.A."/>
            <person name="de Oliveira M.C."/>
            <person name="Monteiro-Vitorello C.B."/>
            <person name="Miyaki C.Y."/>
            <person name="Furlan L.R."/>
            <person name="Camargo L.E.A."/>
            <person name="da Silva A.C.R."/>
            <person name="Moon D.H."/>
            <person name="Takita M.A."/>
            <person name="Lemos E.G.M."/>
            <person name="Machado M.A."/>
            <person name="Ferro M.I.T."/>
            <person name="da Silva F.R."/>
            <person name="Goldman M.H.S."/>
            <person name="Goldman G.H."/>
            <person name="Lemos M.V.F."/>
            <person name="El-Dorry H."/>
            <person name="Tsai S.M."/>
            <person name="Carrer H."/>
            <person name="Carraro D.M."/>
            <person name="de Oliveira R.C."/>
            <person name="Nunes L.R."/>
            <person name="Siqueira W.J."/>
            <person name="Coutinho L.L."/>
            <person name="Kimura E.T."/>
            <person name="Ferro E.S."/>
            <person name="Harakava R."/>
            <person name="Kuramae E.E."/>
            <person name="Marino C.L."/>
            <person name="Giglioti E."/>
            <person name="Abreu I.L."/>
            <person name="Alves L.M.C."/>
            <person name="do Amaral A.M."/>
            <person name="Baia G.S."/>
            <person name="Blanco S.R."/>
            <person name="Brito M.S."/>
            <person name="Cannavan F.S."/>
            <person name="Celestino A.V."/>
            <person name="da Cunha A.F."/>
            <person name="Fenille R.C."/>
            <person name="Ferro J.A."/>
            <person name="Formighieri E.F."/>
            <person name="Kishi L.T."/>
            <person name="Leoni S.G."/>
            <person name="Oliveira A.R."/>
            <person name="Rosa V.E. Jr."/>
            <person name="Sassaki F.T."/>
            <person name="Sena J.A.D."/>
            <person name="de Souza A.A."/>
            <person name="Truffi D."/>
            <person name="Tsukumo F."/>
            <person name="Yanai G.M."/>
            <person name="Zaros L.G."/>
            <person name="Civerolo E.L."/>
            <person name="Simpson A.J.G."/>
            <person name="Almeida N.F. Jr."/>
            <person name="Setubal J.C."/>
            <person name="Kitajima J.P."/>
        </authorList>
    </citation>
    <scope>NUCLEOTIDE SEQUENCE [LARGE SCALE GENOMIC DNA]</scope>
    <source>
        <strain>Temecula1 / ATCC 700964</strain>
    </source>
</reference>
<organism>
    <name type="scientific">Xylella fastidiosa (strain Temecula1 / ATCC 700964)</name>
    <dbReference type="NCBI Taxonomy" id="183190"/>
    <lineage>
        <taxon>Bacteria</taxon>
        <taxon>Pseudomonadati</taxon>
        <taxon>Pseudomonadota</taxon>
        <taxon>Gammaproteobacteria</taxon>
        <taxon>Lysobacterales</taxon>
        <taxon>Lysobacteraceae</taxon>
        <taxon>Xylella</taxon>
    </lineage>
</organism>
<comment type="function">
    <text evidence="1">Involved in the binding of tRNA to the ribosomes.</text>
</comment>
<comment type="subunit">
    <text evidence="1">Part of the 30S ribosomal subunit.</text>
</comment>
<comment type="similarity">
    <text evidence="1">Belongs to the universal ribosomal protein uS10 family.</text>
</comment>
<dbReference type="EMBL" id="AE009442">
    <property type="protein sequence ID" value="AAO28315.1"/>
    <property type="molecule type" value="Genomic_DNA"/>
</dbReference>
<dbReference type="RefSeq" id="WP_004090086.1">
    <property type="nucleotide sequence ID" value="NC_004556.1"/>
</dbReference>
<dbReference type="SMR" id="P66349"/>
<dbReference type="KEGG" id="xft:PD_0436"/>
<dbReference type="HOGENOM" id="CLU_122625_1_3_6"/>
<dbReference type="Proteomes" id="UP000002516">
    <property type="component" value="Chromosome"/>
</dbReference>
<dbReference type="GO" id="GO:1990904">
    <property type="term" value="C:ribonucleoprotein complex"/>
    <property type="evidence" value="ECO:0007669"/>
    <property type="project" value="UniProtKB-KW"/>
</dbReference>
<dbReference type="GO" id="GO:0005840">
    <property type="term" value="C:ribosome"/>
    <property type="evidence" value="ECO:0007669"/>
    <property type="project" value="UniProtKB-KW"/>
</dbReference>
<dbReference type="GO" id="GO:0003735">
    <property type="term" value="F:structural constituent of ribosome"/>
    <property type="evidence" value="ECO:0007669"/>
    <property type="project" value="InterPro"/>
</dbReference>
<dbReference type="GO" id="GO:0000049">
    <property type="term" value="F:tRNA binding"/>
    <property type="evidence" value="ECO:0007669"/>
    <property type="project" value="UniProtKB-UniRule"/>
</dbReference>
<dbReference type="GO" id="GO:0006412">
    <property type="term" value="P:translation"/>
    <property type="evidence" value="ECO:0007669"/>
    <property type="project" value="UniProtKB-UniRule"/>
</dbReference>
<dbReference type="FunFam" id="3.30.70.600:FF:000003">
    <property type="entry name" value="30S ribosomal protein S10"/>
    <property type="match status" value="1"/>
</dbReference>
<dbReference type="Gene3D" id="3.30.70.600">
    <property type="entry name" value="Ribosomal protein S10 domain"/>
    <property type="match status" value="1"/>
</dbReference>
<dbReference type="HAMAP" id="MF_00508">
    <property type="entry name" value="Ribosomal_uS10"/>
    <property type="match status" value="1"/>
</dbReference>
<dbReference type="InterPro" id="IPR001848">
    <property type="entry name" value="Ribosomal_uS10"/>
</dbReference>
<dbReference type="InterPro" id="IPR018268">
    <property type="entry name" value="Ribosomal_uS10_CS"/>
</dbReference>
<dbReference type="InterPro" id="IPR027486">
    <property type="entry name" value="Ribosomal_uS10_dom"/>
</dbReference>
<dbReference type="InterPro" id="IPR036838">
    <property type="entry name" value="Ribosomal_uS10_dom_sf"/>
</dbReference>
<dbReference type="NCBIfam" id="NF001861">
    <property type="entry name" value="PRK00596.1"/>
    <property type="match status" value="1"/>
</dbReference>
<dbReference type="NCBIfam" id="TIGR01049">
    <property type="entry name" value="rpsJ_bact"/>
    <property type="match status" value="1"/>
</dbReference>
<dbReference type="PANTHER" id="PTHR11700">
    <property type="entry name" value="30S RIBOSOMAL PROTEIN S10 FAMILY MEMBER"/>
    <property type="match status" value="1"/>
</dbReference>
<dbReference type="Pfam" id="PF00338">
    <property type="entry name" value="Ribosomal_S10"/>
    <property type="match status" value="1"/>
</dbReference>
<dbReference type="PRINTS" id="PR00971">
    <property type="entry name" value="RIBOSOMALS10"/>
</dbReference>
<dbReference type="SMART" id="SM01403">
    <property type="entry name" value="Ribosomal_S10"/>
    <property type="match status" value="1"/>
</dbReference>
<dbReference type="SUPFAM" id="SSF54999">
    <property type="entry name" value="Ribosomal protein S10"/>
    <property type="match status" value="1"/>
</dbReference>
<dbReference type="PROSITE" id="PS00361">
    <property type="entry name" value="RIBOSOMAL_S10"/>
    <property type="match status" value="1"/>
</dbReference>